<protein>
    <recommendedName>
        <fullName evidence="1">UPF0349 protein GK2958</fullName>
    </recommendedName>
</protein>
<dbReference type="EMBL" id="BA000043">
    <property type="protein sequence ID" value="BAD77243.1"/>
    <property type="status" value="ALT_INIT"/>
    <property type="molecule type" value="Genomic_DNA"/>
</dbReference>
<dbReference type="SMR" id="Q5KVP3"/>
<dbReference type="STRING" id="235909.GK2958"/>
<dbReference type="KEGG" id="gka:GK2958"/>
<dbReference type="eggNOG" id="COG4844">
    <property type="taxonomic scope" value="Bacteria"/>
</dbReference>
<dbReference type="HOGENOM" id="CLU_182025_0_0_9"/>
<dbReference type="Proteomes" id="UP000001172">
    <property type="component" value="Chromosome"/>
</dbReference>
<dbReference type="HAMAP" id="MF_01542">
    <property type="entry name" value="UPF0349"/>
    <property type="match status" value="1"/>
</dbReference>
<dbReference type="InterPro" id="IPR009910">
    <property type="entry name" value="DUF1450"/>
</dbReference>
<dbReference type="InterPro" id="IPR022916">
    <property type="entry name" value="UPF0349"/>
</dbReference>
<dbReference type="NCBIfam" id="NF010190">
    <property type="entry name" value="PRK13669.1"/>
    <property type="match status" value="1"/>
</dbReference>
<dbReference type="Pfam" id="PF07293">
    <property type="entry name" value="DUF1450"/>
    <property type="match status" value="1"/>
</dbReference>
<evidence type="ECO:0000255" key="1">
    <source>
        <dbReference type="HAMAP-Rule" id="MF_01542"/>
    </source>
</evidence>
<evidence type="ECO:0000305" key="2"/>
<sequence length="78" mass="8916">MLPIIEFCISNLASGSYKAMEMLEKDPNLDIIEYSCLSYCTRCAETLFALVNGEFVSGETPEQLVENIYRHLEENPMF</sequence>
<name>Y2958_GEOKA</name>
<keyword id="KW-1185">Reference proteome</keyword>
<feature type="chain" id="PRO_0000165890" description="UPF0349 protein GK2958">
    <location>
        <begin position="1"/>
        <end position="78"/>
    </location>
</feature>
<gene>
    <name type="ordered locus">GK2958</name>
</gene>
<proteinExistence type="inferred from homology"/>
<organism>
    <name type="scientific">Geobacillus kaustophilus (strain HTA426)</name>
    <dbReference type="NCBI Taxonomy" id="235909"/>
    <lineage>
        <taxon>Bacteria</taxon>
        <taxon>Bacillati</taxon>
        <taxon>Bacillota</taxon>
        <taxon>Bacilli</taxon>
        <taxon>Bacillales</taxon>
        <taxon>Anoxybacillaceae</taxon>
        <taxon>Geobacillus</taxon>
        <taxon>Geobacillus thermoleovorans group</taxon>
    </lineage>
</organism>
<accession>Q5KVP3</accession>
<comment type="similarity">
    <text evidence="1">Belongs to the UPF0349 family.</text>
</comment>
<comment type="sequence caution" evidence="2">
    <conflict type="erroneous initiation">
        <sequence resource="EMBL-CDS" id="BAD77243"/>
    </conflict>
</comment>
<reference key="1">
    <citation type="journal article" date="2004" name="Nucleic Acids Res.">
        <title>Thermoadaptation trait revealed by the genome sequence of thermophilic Geobacillus kaustophilus.</title>
        <authorList>
            <person name="Takami H."/>
            <person name="Takaki Y."/>
            <person name="Chee G.-J."/>
            <person name="Nishi S."/>
            <person name="Shimamura S."/>
            <person name="Suzuki H."/>
            <person name="Matsui S."/>
            <person name="Uchiyama I."/>
        </authorList>
    </citation>
    <scope>NUCLEOTIDE SEQUENCE [LARGE SCALE GENOMIC DNA]</scope>
    <source>
        <strain>HTA426</strain>
    </source>
</reference>